<gene>
    <name evidence="1" type="primary">secA</name>
    <name type="ordered locus">MGAS9429_Spy1538</name>
</gene>
<proteinExistence type="inferred from homology"/>
<protein>
    <recommendedName>
        <fullName evidence="1">Protein translocase subunit SecA</fullName>
        <ecNumber evidence="1">7.4.2.8</ecNumber>
    </recommendedName>
</protein>
<reference key="1">
    <citation type="journal article" date="2006" name="Proc. Natl. Acad. Sci. U.S.A.">
        <title>Molecular genetic anatomy of inter- and intraserotype variation in the human bacterial pathogen group A Streptococcus.</title>
        <authorList>
            <person name="Beres S.B."/>
            <person name="Richter E.W."/>
            <person name="Nagiec M.J."/>
            <person name="Sumby P."/>
            <person name="Porcella S.F."/>
            <person name="DeLeo F.R."/>
            <person name="Musser J.M."/>
        </authorList>
    </citation>
    <scope>NUCLEOTIDE SEQUENCE [LARGE SCALE GENOMIC DNA]</scope>
    <source>
        <strain>MGAS9429</strain>
    </source>
</reference>
<accession>Q1JK98</accession>
<feature type="chain" id="PRO_0000318448" description="Protein translocase subunit SecA">
    <location>
        <begin position="1"/>
        <end position="839"/>
    </location>
</feature>
<feature type="region of interest" description="Disordered" evidence="2">
    <location>
        <begin position="780"/>
        <end position="839"/>
    </location>
</feature>
<feature type="compositionally biased region" description="Basic and acidic residues" evidence="2">
    <location>
        <begin position="780"/>
        <end position="790"/>
    </location>
</feature>
<feature type="compositionally biased region" description="Polar residues" evidence="2">
    <location>
        <begin position="791"/>
        <end position="809"/>
    </location>
</feature>
<feature type="compositionally biased region" description="Basic residues" evidence="2">
    <location>
        <begin position="827"/>
        <end position="839"/>
    </location>
</feature>
<feature type="binding site" evidence="1">
    <location>
        <position position="85"/>
    </location>
    <ligand>
        <name>ATP</name>
        <dbReference type="ChEBI" id="CHEBI:30616"/>
    </ligand>
</feature>
<feature type="binding site" evidence="1">
    <location>
        <begin position="103"/>
        <end position="107"/>
    </location>
    <ligand>
        <name>ATP</name>
        <dbReference type="ChEBI" id="CHEBI:30616"/>
    </ligand>
</feature>
<feature type="binding site" evidence="1">
    <location>
        <position position="493"/>
    </location>
    <ligand>
        <name>ATP</name>
        <dbReference type="ChEBI" id="CHEBI:30616"/>
    </ligand>
</feature>
<feature type="binding site" evidence="1">
    <location>
        <position position="821"/>
    </location>
    <ligand>
        <name>Zn(2+)</name>
        <dbReference type="ChEBI" id="CHEBI:29105"/>
    </ligand>
</feature>
<feature type="binding site" evidence="1">
    <location>
        <position position="823"/>
    </location>
    <ligand>
        <name>Zn(2+)</name>
        <dbReference type="ChEBI" id="CHEBI:29105"/>
    </ligand>
</feature>
<feature type="binding site" evidence="1">
    <location>
        <position position="832"/>
    </location>
    <ligand>
        <name>Zn(2+)</name>
        <dbReference type="ChEBI" id="CHEBI:29105"/>
    </ligand>
</feature>
<feature type="binding site" evidence="1">
    <location>
        <position position="833"/>
    </location>
    <ligand>
        <name>Zn(2+)</name>
        <dbReference type="ChEBI" id="CHEBI:29105"/>
    </ligand>
</feature>
<comment type="function">
    <text evidence="1">Part of the Sec protein translocase complex. Interacts with the SecYEG preprotein conducting channel. Has a central role in coupling the hydrolysis of ATP to the transfer of proteins into and across the cell membrane, serving as an ATP-driven molecular motor driving the stepwise translocation of polypeptide chains across the membrane.</text>
</comment>
<comment type="catalytic activity">
    <reaction evidence="1">
        <text>ATP + H2O + cellular proteinSide 1 = ADP + phosphate + cellular proteinSide 2.</text>
        <dbReference type="EC" id="7.4.2.8"/>
    </reaction>
</comment>
<comment type="cofactor">
    <cofactor evidence="1">
        <name>Zn(2+)</name>
        <dbReference type="ChEBI" id="CHEBI:29105"/>
    </cofactor>
    <text evidence="1">May bind 1 zinc ion per subunit.</text>
</comment>
<comment type="subunit">
    <text evidence="1">Monomer and homodimer. Part of the essential Sec protein translocation apparatus which comprises SecA, SecYEG and auxiliary proteins SecDF. Other proteins may also be involved.</text>
</comment>
<comment type="subcellular location">
    <subcellularLocation>
        <location evidence="1">Cell membrane</location>
        <topology evidence="1">Peripheral membrane protein</topology>
        <orientation evidence="1">Cytoplasmic side</orientation>
    </subcellularLocation>
    <subcellularLocation>
        <location evidence="1">Cytoplasm</location>
    </subcellularLocation>
    <text evidence="1">Distribution is 50-50.</text>
</comment>
<comment type="similarity">
    <text evidence="1">Belongs to the SecA family.</text>
</comment>
<organism>
    <name type="scientific">Streptococcus pyogenes serotype M12 (strain MGAS9429)</name>
    <dbReference type="NCBI Taxonomy" id="370551"/>
    <lineage>
        <taxon>Bacteria</taxon>
        <taxon>Bacillati</taxon>
        <taxon>Bacillota</taxon>
        <taxon>Bacilli</taxon>
        <taxon>Lactobacillales</taxon>
        <taxon>Streptococcaceae</taxon>
        <taxon>Streptococcus</taxon>
    </lineage>
</organism>
<evidence type="ECO:0000255" key="1">
    <source>
        <dbReference type="HAMAP-Rule" id="MF_01382"/>
    </source>
</evidence>
<evidence type="ECO:0000256" key="2">
    <source>
        <dbReference type="SAM" id="MobiDB-lite"/>
    </source>
</evidence>
<name>SECA_STRPC</name>
<sequence length="839" mass="94705">MANILRKVIENDKGELRKLEKIAKKVESYADQMASLSDRDLQGKTLEFKERYQKGETLEQLLPEAFAVVREAAKRVLGLFPYRVQIMGGIVLHNGDVPEMRTGEGKTLTATMPVYLNAIAGEGVHVITVNEYLSTRDATEMGEVYSWLGLSVGINLAAKSPAEKREAYNCDITYSTNSEVGFDYLRDNMVVRQEDMVQRPLNFALVDEVDSVLIDEARTPLIVSGAVSSETNQLYIRADMFVKTLTSVDYVIDVPTKTIGLSDSGIDKAESYFNLSNLYDIENVALTHFIDNALRANYIMLLDIDYVVSEDGEILIVDQFTGRTMEGRRFSDGLHQAIEAKEGVRIQEESKTSASITYQNMFRMYKKLAGMTGTAKTEEEEFREVYNMRIIPIPTNRPIARIDHTDLLYPTLESKFRAVVEDVKTRHAKGQPILVGTVAVETSDLISRKLVEAGIPHEVLNAKNHFKEAQIIMNAGQRGAVTIATNMAGRGTDIKLGEGVRELGGLCVIGTERHESRRIDNQLRGRSGRQGDPGESQFYLSLEDDLMRRFGSDRIKAFLDRMKLDEEDTVIKSGMLGRQVESAQKRVEGNNYDTRKQVLQYDDVMREQREIIYANRRDVITANRDLGPEIKAMIKRTIDRAVDAHARSNRKDAIDAIVTFARTSLVPEESISAKELRGLKDDQIKEKLYQRALAIYDQQLSKLRDQEAIIEFQKVLILMIVDNKWTEHIDALDQLRNAVGLRGYAQNNPVVEYQAEGFKMFQDMIGAIEFDVTRTMMKAQIHEQERERASQRATTAAPQNIQSQQSANTDDLPKVERNEACPCGSGKKFKNCHGRKSFS</sequence>
<keyword id="KW-0067">ATP-binding</keyword>
<keyword id="KW-1003">Cell membrane</keyword>
<keyword id="KW-0963">Cytoplasm</keyword>
<keyword id="KW-0472">Membrane</keyword>
<keyword id="KW-0479">Metal-binding</keyword>
<keyword id="KW-0547">Nucleotide-binding</keyword>
<keyword id="KW-0653">Protein transport</keyword>
<keyword id="KW-1278">Translocase</keyword>
<keyword id="KW-0811">Translocation</keyword>
<keyword id="KW-0813">Transport</keyword>
<keyword id="KW-0862">Zinc</keyword>
<dbReference type="EC" id="7.4.2.8" evidence="1"/>
<dbReference type="EMBL" id="CP000259">
    <property type="protein sequence ID" value="ABF32725.1"/>
    <property type="molecule type" value="Genomic_DNA"/>
</dbReference>
<dbReference type="RefSeq" id="WP_002988523.1">
    <property type="nucleotide sequence ID" value="NC_008021.1"/>
</dbReference>
<dbReference type="SMR" id="Q1JK98"/>
<dbReference type="GeneID" id="69900360"/>
<dbReference type="KEGG" id="spk:MGAS9429_Spy1538"/>
<dbReference type="HOGENOM" id="CLU_005314_3_0_9"/>
<dbReference type="Proteomes" id="UP000002433">
    <property type="component" value="Chromosome"/>
</dbReference>
<dbReference type="GO" id="GO:0031522">
    <property type="term" value="C:cell envelope Sec protein transport complex"/>
    <property type="evidence" value="ECO:0007669"/>
    <property type="project" value="TreeGrafter"/>
</dbReference>
<dbReference type="GO" id="GO:0005829">
    <property type="term" value="C:cytosol"/>
    <property type="evidence" value="ECO:0007669"/>
    <property type="project" value="TreeGrafter"/>
</dbReference>
<dbReference type="GO" id="GO:0005886">
    <property type="term" value="C:plasma membrane"/>
    <property type="evidence" value="ECO:0007669"/>
    <property type="project" value="UniProtKB-SubCell"/>
</dbReference>
<dbReference type="GO" id="GO:0005524">
    <property type="term" value="F:ATP binding"/>
    <property type="evidence" value="ECO:0007669"/>
    <property type="project" value="UniProtKB-UniRule"/>
</dbReference>
<dbReference type="GO" id="GO:0046872">
    <property type="term" value="F:metal ion binding"/>
    <property type="evidence" value="ECO:0007669"/>
    <property type="project" value="UniProtKB-KW"/>
</dbReference>
<dbReference type="GO" id="GO:0008564">
    <property type="term" value="F:protein-exporting ATPase activity"/>
    <property type="evidence" value="ECO:0007669"/>
    <property type="project" value="UniProtKB-EC"/>
</dbReference>
<dbReference type="GO" id="GO:0065002">
    <property type="term" value="P:intracellular protein transmembrane transport"/>
    <property type="evidence" value="ECO:0007669"/>
    <property type="project" value="UniProtKB-UniRule"/>
</dbReference>
<dbReference type="GO" id="GO:0017038">
    <property type="term" value="P:protein import"/>
    <property type="evidence" value="ECO:0007669"/>
    <property type="project" value="InterPro"/>
</dbReference>
<dbReference type="GO" id="GO:0006605">
    <property type="term" value="P:protein targeting"/>
    <property type="evidence" value="ECO:0007669"/>
    <property type="project" value="UniProtKB-UniRule"/>
</dbReference>
<dbReference type="GO" id="GO:0043952">
    <property type="term" value="P:protein transport by the Sec complex"/>
    <property type="evidence" value="ECO:0007669"/>
    <property type="project" value="TreeGrafter"/>
</dbReference>
<dbReference type="CDD" id="cd17928">
    <property type="entry name" value="DEXDc_SecA"/>
    <property type="match status" value="1"/>
</dbReference>
<dbReference type="CDD" id="cd18803">
    <property type="entry name" value="SF2_C_secA"/>
    <property type="match status" value="1"/>
</dbReference>
<dbReference type="FunFam" id="1.10.3060.10:FF:000002">
    <property type="entry name" value="Preprotein translocase subunit SecA"/>
    <property type="match status" value="1"/>
</dbReference>
<dbReference type="FunFam" id="3.40.50.300:FF:000429">
    <property type="entry name" value="Preprotein translocase subunit SecA"/>
    <property type="match status" value="1"/>
</dbReference>
<dbReference type="FunFam" id="3.90.1440.10:FF:000001">
    <property type="entry name" value="Preprotein translocase subunit SecA"/>
    <property type="match status" value="1"/>
</dbReference>
<dbReference type="Gene3D" id="1.10.3060.10">
    <property type="entry name" value="Helical scaffold and wing domains of SecA"/>
    <property type="match status" value="1"/>
</dbReference>
<dbReference type="Gene3D" id="3.40.50.300">
    <property type="entry name" value="P-loop containing nucleotide triphosphate hydrolases"/>
    <property type="match status" value="3"/>
</dbReference>
<dbReference type="Gene3D" id="3.90.1440.10">
    <property type="entry name" value="SecA, preprotein cross-linking domain"/>
    <property type="match status" value="1"/>
</dbReference>
<dbReference type="HAMAP" id="MF_01382">
    <property type="entry name" value="SecA"/>
    <property type="match status" value="1"/>
</dbReference>
<dbReference type="InterPro" id="IPR014001">
    <property type="entry name" value="Helicase_ATP-bd"/>
</dbReference>
<dbReference type="InterPro" id="IPR001650">
    <property type="entry name" value="Helicase_C-like"/>
</dbReference>
<dbReference type="InterPro" id="IPR027417">
    <property type="entry name" value="P-loop_NTPase"/>
</dbReference>
<dbReference type="InterPro" id="IPR004027">
    <property type="entry name" value="SEC_C_motif"/>
</dbReference>
<dbReference type="InterPro" id="IPR000185">
    <property type="entry name" value="SecA"/>
</dbReference>
<dbReference type="InterPro" id="IPR020937">
    <property type="entry name" value="SecA_CS"/>
</dbReference>
<dbReference type="InterPro" id="IPR011115">
    <property type="entry name" value="SecA_DEAD"/>
</dbReference>
<dbReference type="InterPro" id="IPR014018">
    <property type="entry name" value="SecA_motor_DEAD"/>
</dbReference>
<dbReference type="InterPro" id="IPR011130">
    <property type="entry name" value="SecA_preprotein_X-link_dom"/>
</dbReference>
<dbReference type="InterPro" id="IPR044722">
    <property type="entry name" value="SecA_SF2_C"/>
</dbReference>
<dbReference type="InterPro" id="IPR011116">
    <property type="entry name" value="SecA_Wing/Scaffold"/>
</dbReference>
<dbReference type="InterPro" id="IPR036266">
    <property type="entry name" value="SecA_Wing/Scaffold_sf"/>
</dbReference>
<dbReference type="InterPro" id="IPR036670">
    <property type="entry name" value="SecA_X-link_sf"/>
</dbReference>
<dbReference type="NCBIfam" id="NF006630">
    <property type="entry name" value="PRK09200.1"/>
    <property type="match status" value="1"/>
</dbReference>
<dbReference type="NCBIfam" id="TIGR00963">
    <property type="entry name" value="secA"/>
    <property type="match status" value="1"/>
</dbReference>
<dbReference type="PANTHER" id="PTHR30612:SF0">
    <property type="entry name" value="CHLOROPLAST PROTEIN-TRANSPORTING ATPASE"/>
    <property type="match status" value="1"/>
</dbReference>
<dbReference type="PANTHER" id="PTHR30612">
    <property type="entry name" value="SECA INNER MEMBRANE COMPONENT OF SEC PROTEIN SECRETION SYSTEM"/>
    <property type="match status" value="1"/>
</dbReference>
<dbReference type="Pfam" id="PF21090">
    <property type="entry name" value="P-loop_SecA"/>
    <property type="match status" value="2"/>
</dbReference>
<dbReference type="Pfam" id="PF02810">
    <property type="entry name" value="SEC-C"/>
    <property type="match status" value="1"/>
</dbReference>
<dbReference type="Pfam" id="PF07517">
    <property type="entry name" value="SecA_DEAD"/>
    <property type="match status" value="1"/>
</dbReference>
<dbReference type="Pfam" id="PF01043">
    <property type="entry name" value="SecA_PP_bind"/>
    <property type="match status" value="1"/>
</dbReference>
<dbReference type="Pfam" id="PF07516">
    <property type="entry name" value="SecA_SW"/>
    <property type="match status" value="1"/>
</dbReference>
<dbReference type="PRINTS" id="PR00906">
    <property type="entry name" value="SECA"/>
</dbReference>
<dbReference type="SMART" id="SM00957">
    <property type="entry name" value="SecA_DEAD"/>
    <property type="match status" value="1"/>
</dbReference>
<dbReference type="SMART" id="SM00958">
    <property type="entry name" value="SecA_PP_bind"/>
    <property type="match status" value="1"/>
</dbReference>
<dbReference type="SUPFAM" id="SSF81886">
    <property type="entry name" value="Helical scaffold and wing domains of SecA"/>
    <property type="match status" value="1"/>
</dbReference>
<dbReference type="SUPFAM" id="SSF52540">
    <property type="entry name" value="P-loop containing nucleoside triphosphate hydrolases"/>
    <property type="match status" value="2"/>
</dbReference>
<dbReference type="SUPFAM" id="SSF81767">
    <property type="entry name" value="Pre-protein crosslinking domain of SecA"/>
    <property type="match status" value="1"/>
</dbReference>
<dbReference type="PROSITE" id="PS01312">
    <property type="entry name" value="SECA"/>
    <property type="match status" value="1"/>
</dbReference>
<dbReference type="PROSITE" id="PS51196">
    <property type="entry name" value="SECA_MOTOR_DEAD"/>
    <property type="match status" value="1"/>
</dbReference>